<accession>B1LID3</accession>
<reference key="1">
    <citation type="journal article" date="2008" name="J. Bacteriol.">
        <title>Insights into the environmental resistance gene pool from the genome sequence of the multidrug-resistant environmental isolate Escherichia coli SMS-3-5.</title>
        <authorList>
            <person name="Fricke W.F."/>
            <person name="Wright M.S."/>
            <person name="Lindell A.H."/>
            <person name="Harkins D.M."/>
            <person name="Baker-Austin C."/>
            <person name="Ravel J."/>
            <person name="Stepanauskas R."/>
        </authorList>
    </citation>
    <scope>NUCLEOTIDE SEQUENCE [LARGE SCALE GENOMIC DNA]</scope>
    <source>
        <strain>SMS-3-5 / SECEC</strain>
    </source>
</reference>
<dbReference type="EMBL" id="CP000970">
    <property type="protein sequence ID" value="ACB18708.1"/>
    <property type="molecule type" value="Genomic_DNA"/>
</dbReference>
<dbReference type="RefSeq" id="WP_000130623.1">
    <property type="nucleotide sequence ID" value="NC_010498.1"/>
</dbReference>
<dbReference type="BMRB" id="B1LID3"/>
<dbReference type="SMR" id="B1LID3"/>
<dbReference type="GeneID" id="89518312"/>
<dbReference type="KEGG" id="ecm:EcSMS35_3754"/>
<dbReference type="HOGENOM" id="CLU_165255_5_0_6"/>
<dbReference type="Proteomes" id="UP000007011">
    <property type="component" value="Chromosome"/>
</dbReference>
<dbReference type="GO" id="GO:0005737">
    <property type="term" value="C:cytoplasm"/>
    <property type="evidence" value="ECO:0007669"/>
    <property type="project" value="UniProtKB-SubCell"/>
</dbReference>
<dbReference type="GO" id="GO:0097163">
    <property type="term" value="F:sulfur carrier activity"/>
    <property type="evidence" value="ECO:0007669"/>
    <property type="project" value="UniProtKB-UniRule"/>
</dbReference>
<dbReference type="GO" id="GO:0002143">
    <property type="term" value="P:tRNA wobble position uridine thiolation"/>
    <property type="evidence" value="ECO:0007669"/>
    <property type="project" value="InterPro"/>
</dbReference>
<dbReference type="CDD" id="cd03423">
    <property type="entry name" value="SirA"/>
    <property type="match status" value="1"/>
</dbReference>
<dbReference type="FunFam" id="3.30.110.40:FF:000002">
    <property type="entry name" value="Sulfur carrier protein TusA"/>
    <property type="match status" value="1"/>
</dbReference>
<dbReference type="Gene3D" id="3.30.110.40">
    <property type="entry name" value="TusA-like domain"/>
    <property type="match status" value="1"/>
</dbReference>
<dbReference type="HAMAP" id="MF_00413">
    <property type="entry name" value="Thiourid_synth_A"/>
    <property type="match status" value="1"/>
</dbReference>
<dbReference type="InterPro" id="IPR022931">
    <property type="entry name" value="Sulphur_carrier_TusA"/>
</dbReference>
<dbReference type="InterPro" id="IPR001455">
    <property type="entry name" value="TusA-like"/>
</dbReference>
<dbReference type="InterPro" id="IPR036868">
    <property type="entry name" value="TusA-like_sf"/>
</dbReference>
<dbReference type="NCBIfam" id="NF001423">
    <property type="entry name" value="PRK00299.1"/>
    <property type="match status" value="1"/>
</dbReference>
<dbReference type="PANTHER" id="PTHR33279:SF2">
    <property type="entry name" value="SULFUR CARRIER PROTEIN TUSA"/>
    <property type="match status" value="1"/>
</dbReference>
<dbReference type="PANTHER" id="PTHR33279">
    <property type="entry name" value="SULFUR CARRIER PROTEIN YEDF-RELATED"/>
    <property type="match status" value="1"/>
</dbReference>
<dbReference type="Pfam" id="PF01206">
    <property type="entry name" value="TusA"/>
    <property type="match status" value="1"/>
</dbReference>
<dbReference type="SUPFAM" id="SSF64307">
    <property type="entry name" value="SirA-like"/>
    <property type="match status" value="1"/>
</dbReference>
<dbReference type="PROSITE" id="PS01148">
    <property type="entry name" value="UPF0033"/>
    <property type="match status" value="1"/>
</dbReference>
<proteinExistence type="inferred from homology"/>
<name>TUSA_ECOSM</name>
<gene>
    <name evidence="1" type="primary">tusA</name>
    <name type="ordered locus">EcSMS35_3754</name>
</gene>
<evidence type="ECO:0000255" key="1">
    <source>
        <dbReference type="HAMAP-Rule" id="MF_00413"/>
    </source>
</evidence>
<organism>
    <name type="scientific">Escherichia coli (strain SMS-3-5 / SECEC)</name>
    <dbReference type="NCBI Taxonomy" id="439855"/>
    <lineage>
        <taxon>Bacteria</taxon>
        <taxon>Pseudomonadati</taxon>
        <taxon>Pseudomonadota</taxon>
        <taxon>Gammaproteobacteria</taxon>
        <taxon>Enterobacterales</taxon>
        <taxon>Enterobacteriaceae</taxon>
        <taxon>Escherichia</taxon>
    </lineage>
</organism>
<sequence>MTDLFSSPDHTLDALGLRCPEPVMMVRKTVRNMQPGETLLIIADDPATTRDIPGFCTFMEHELVAKETDGLPYRYLIRKSG</sequence>
<keyword id="KW-0963">Cytoplasm</keyword>
<keyword id="KW-0819">tRNA processing</keyword>
<protein>
    <recommendedName>
        <fullName evidence="1">Sulfur carrier protein TusA</fullName>
    </recommendedName>
    <alternativeName>
        <fullName evidence="1">Sulfur mediator TusA</fullName>
    </alternativeName>
    <alternativeName>
        <fullName evidence="1">Sulfur transfer protein TusA</fullName>
    </alternativeName>
    <alternativeName>
        <fullName evidence="1">tRNA 2-thiouridine synthesizing protein A</fullName>
    </alternativeName>
</protein>
<feature type="chain" id="PRO_1000199914" description="Sulfur carrier protein TusA">
    <location>
        <begin position="1"/>
        <end position="81"/>
    </location>
</feature>
<feature type="active site" description="Cysteine persulfide intermediate" evidence="1">
    <location>
        <position position="19"/>
    </location>
</feature>
<comment type="function">
    <text evidence="1">Sulfur carrier protein involved in sulfur trafficking in the cell. Part of a sulfur-relay system required for 2-thiolation during synthesis of 2-thiouridine of the modified wobble base 5-methylaminomethyl-2-thiouridine (mnm(5)s(2)U) in tRNA. Interacts with IscS and stimulates its cysteine desulfurase activity. Accepts an activated sulfur from IscS, which is then transferred to TusD, and thus determines the direction of sulfur flow from IscS to 2-thiouridine formation. Also appears to be involved in sulfur transfer for the biosynthesis of molybdopterin.</text>
</comment>
<comment type="pathway">
    <text evidence="1">tRNA modification.</text>
</comment>
<comment type="subunit">
    <text evidence="1">Interacts with IscS.</text>
</comment>
<comment type="subcellular location">
    <subcellularLocation>
        <location evidence="1">Cytoplasm</location>
    </subcellularLocation>
</comment>
<comment type="similarity">
    <text evidence="1">Belongs to the sulfur carrier protein TusA family.</text>
</comment>